<reference key="1">
    <citation type="submission" date="2008-04" db="EMBL/GenBank/DDBJ databases">
        <title>Complete sequence of chromosome of Natranaerobius thermophilus JW/NM-WN-LF.</title>
        <authorList>
            <consortium name="US DOE Joint Genome Institute"/>
            <person name="Copeland A."/>
            <person name="Lucas S."/>
            <person name="Lapidus A."/>
            <person name="Glavina del Rio T."/>
            <person name="Dalin E."/>
            <person name="Tice H."/>
            <person name="Bruce D."/>
            <person name="Goodwin L."/>
            <person name="Pitluck S."/>
            <person name="Chertkov O."/>
            <person name="Brettin T."/>
            <person name="Detter J.C."/>
            <person name="Han C."/>
            <person name="Kuske C.R."/>
            <person name="Schmutz J."/>
            <person name="Larimer F."/>
            <person name="Land M."/>
            <person name="Hauser L."/>
            <person name="Kyrpides N."/>
            <person name="Lykidis A."/>
            <person name="Mesbah N.M."/>
            <person name="Wiegel J."/>
        </authorList>
    </citation>
    <scope>NUCLEOTIDE SEQUENCE [LARGE SCALE GENOMIC DNA]</scope>
    <source>
        <strain>ATCC BAA-1301 / DSM 18059 / JW/NM-WN-LF</strain>
    </source>
</reference>
<protein>
    <recommendedName>
        <fullName evidence="1">tRNA-2-methylthio-N(6)-dimethylallyladenosine synthase</fullName>
        <ecNumber evidence="1">2.8.4.3</ecNumber>
    </recommendedName>
    <alternativeName>
        <fullName evidence="1">(Dimethylallyl)adenosine tRNA methylthiotransferase MiaB</fullName>
    </alternativeName>
    <alternativeName>
        <fullName evidence="1">tRNA-i(6)A37 methylthiotransferase</fullName>
    </alternativeName>
</protein>
<gene>
    <name evidence="1" type="primary">miaB</name>
    <name type="ordered locus">Nther_1495</name>
</gene>
<organism>
    <name type="scientific">Natranaerobius thermophilus (strain ATCC BAA-1301 / DSM 18059 / JW/NM-WN-LF)</name>
    <dbReference type="NCBI Taxonomy" id="457570"/>
    <lineage>
        <taxon>Bacteria</taxon>
        <taxon>Bacillati</taxon>
        <taxon>Bacillota</taxon>
        <taxon>Clostridia</taxon>
        <taxon>Natranaerobiales</taxon>
        <taxon>Natranaerobiaceae</taxon>
        <taxon>Natranaerobius</taxon>
    </lineage>
</organism>
<sequence>MTLYQLGNGKKFYTLTFGCQMNEHDSEVLAGMLDQMGFEKAASEEEADLLIINTCAVREKAEQKVLGKIGTLRYLKENKPDMKIAIGGCMVQQEHVANKIYRDFTHVDIIFGTHNINRFPQLLEHVMQKGKRVKEISQDDSQVFENLPHKREDSIKAWVVISYGCDNYCKYCIVPYVRGQQRSRDPEHIKYEVEKLAKEGLKEITLLGQNVNSYGKDLDQNISFTNLLEELSKIEGIERIRFMTSHPKDFDKELITTLKESNKICEHFHLPVQAGSNKILKKMGRGYTREHYVDIVNDIRAELPNASITTDIIVGYPGEEEEDFQETLDLVQNVKFDSAFTFVYSKRSGTPAAEMAEQVDEQTKKGRIQKLISVQQEISEQRNKDLENTVQRILVEGVSKNNEDMLSGRTRTDKLVHFPGDKELIGELVDVKITRGHSWNLYGEIFEDSLT</sequence>
<dbReference type="EC" id="2.8.4.3" evidence="1"/>
<dbReference type="EMBL" id="CP001034">
    <property type="protein sequence ID" value="ACB85078.1"/>
    <property type="molecule type" value="Genomic_DNA"/>
</dbReference>
<dbReference type="RefSeq" id="WP_012447950.1">
    <property type="nucleotide sequence ID" value="NC_010718.1"/>
</dbReference>
<dbReference type="SMR" id="B2A3X6"/>
<dbReference type="FunCoup" id="B2A3X6">
    <property type="interactions" value="419"/>
</dbReference>
<dbReference type="STRING" id="457570.Nther_1495"/>
<dbReference type="KEGG" id="nth:Nther_1495"/>
<dbReference type="eggNOG" id="COG0621">
    <property type="taxonomic scope" value="Bacteria"/>
</dbReference>
<dbReference type="HOGENOM" id="CLU_018697_2_0_9"/>
<dbReference type="InParanoid" id="B2A3X6"/>
<dbReference type="OrthoDB" id="9805215at2"/>
<dbReference type="Proteomes" id="UP000001683">
    <property type="component" value="Chromosome"/>
</dbReference>
<dbReference type="GO" id="GO:0005829">
    <property type="term" value="C:cytosol"/>
    <property type="evidence" value="ECO:0007669"/>
    <property type="project" value="TreeGrafter"/>
</dbReference>
<dbReference type="GO" id="GO:0051539">
    <property type="term" value="F:4 iron, 4 sulfur cluster binding"/>
    <property type="evidence" value="ECO:0007669"/>
    <property type="project" value="UniProtKB-UniRule"/>
</dbReference>
<dbReference type="GO" id="GO:0046872">
    <property type="term" value="F:metal ion binding"/>
    <property type="evidence" value="ECO:0007669"/>
    <property type="project" value="UniProtKB-KW"/>
</dbReference>
<dbReference type="GO" id="GO:0035597">
    <property type="term" value="F:N6-isopentenyladenosine methylthiotransferase activity"/>
    <property type="evidence" value="ECO:0007669"/>
    <property type="project" value="TreeGrafter"/>
</dbReference>
<dbReference type="CDD" id="cd01335">
    <property type="entry name" value="Radical_SAM"/>
    <property type="match status" value="1"/>
</dbReference>
<dbReference type="FunFam" id="3.40.50.12160:FF:000006">
    <property type="entry name" value="tRNA-2-methylthio-N(6)-dimethylallyladenosine synthase"/>
    <property type="match status" value="1"/>
</dbReference>
<dbReference type="FunFam" id="3.80.30.20:FF:000001">
    <property type="entry name" value="tRNA-2-methylthio-N(6)-dimethylallyladenosine synthase 2"/>
    <property type="match status" value="1"/>
</dbReference>
<dbReference type="Gene3D" id="3.40.50.12160">
    <property type="entry name" value="Methylthiotransferase, N-terminal domain"/>
    <property type="match status" value="1"/>
</dbReference>
<dbReference type="Gene3D" id="3.80.30.20">
    <property type="entry name" value="tm_1862 like domain"/>
    <property type="match status" value="1"/>
</dbReference>
<dbReference type="HAMAP" id="MF_01864">
    <property type="entry name" value="tRNA_metthiotr_MiaB"/>
    <property type="match status" value="1"/>
</dbReference>
<dbReference type="InterPro" id="IPR006638">
    <property type="entry name" value="Elp3/MiaA/NifB-like_rSAM"/>
</dbReference>
<dbReference type="InterPro" id="IPR005839">
    <property type="entry name" value="Methylthiotransferase"/>
</dbReference>
<dbReference type="InterPro" id="IPR013848">
    <property type="entry name" value="Methylthiotransferase_N"/>
</dbReference>
<dbReference type="InterPro" id="IPR038135">
    <property type="entry name" value="Methylthiotransferase_N_sf"/>
</dbReference>
<dbReference type="InterPro" id="IPR006467">
    <property type="entry name" value="MiaB-like_bact"/>
</dbReference>
<dbReference type="InterPro" id="IPR006463">
    <property type="entry name" value="MiaB_methiolase"/>
</dbReference>
<dbReference type="InterPro" id="IPR007197">
    <property type="entry name" value="rSAM"/>
</dbReference>
<dbReference type="InterPro" id="IPR023404">
    <property type="entry name" value="rSAM_horseshoe"/>
</dbReference>
<dbReference type="InterPro" id="IPR002792">
    <property type="entry name" value="TRAM_dom"/>
</dbReference>
<dbReference type="NCBIfam" id="TIGR01579">
    <property type="entry name" value="MiaB-like-C"/>
    <property type="match status" value="1"/>
</dbReference>
<dbReference type="NCBIfam" id="TIGR01574">
    <property type="entry name" value="miaB-methiolase"/>
    <property type="match status" value="1"/>
</dbReference>
<dbReference type="NCBIfam" id="TIGR00089">
    <property type="entry name" value="MiaB/RimO family radical SAM methylthiotransferase"/>
    <property type="match status" value="1"/>
</dbReference>
<dbReference type="PANTHER" id="PTHR43020">
    <property type="entry name" value="CDK5 REGULATORY SUBUNIT-ASSOCIATED PROTEIN 1"/>
    <property type="match status" value="1"/>
</dbReference>
<dbReference type="PANTHER" id="PTHR43020:SF2">
    <property type="entry name" value="MITOCHONDRIAL TRNA METHYLTHIOTRANSFERASE CDK5RAP1"/>
    <property type="match status" value="1"/>
</dbReference>
<dbReference type="Pfam" id="PF04055">
    <property type="entry name" value="Radical_SAM"/>
    <property type="match status" value="1"/>
</dbReference>
<dbReference type="Pfam" id="PF01938">
    <property type="entry name" value="TRAM"/>
    <property type="match status" value="1"/>
</dbReference>
<dbReference type="Pfam" id="PF00919">
    <property type="entry name" value="UPF0004"/>
    <property type="match status" value="1"/>
</dbReference>
<dbReference type="SFLD" id="SFLDF00273">
    <property type="entry name" value="(dimethylallyl)adenosine_tRNA"/>
    <property type="match status" value="1"/>
</dbReference>
<dbReference type="SFLD" id="SFLDG01082">
    <property type="entry name" value="B12-binding_domain_containing"/>
    <property type="match status" value="1"/>
</dbReference>
<dbReference type="SFLD" id="SFLDS00029">
    <property type="entry name" value="Radical_SAM"/>
    <property type="match status" value="1"/>
</dbReference>
<dbReference type="SMART" id="SM00729">
    <property type="entry name" value="Elp3"/>
    <property type="match status" value="1"/>
</dbReference>
<dbReference type="SUPFAM" id="SSF102114">
    <property type="entry name" value="Radical SAM enzymes"/>
    <property type="match status" value="1"/>
</dbReference>
<dbReference type="PROSITE" id="PS51449">
    <property type="entry name" value="MTTASE_N"/>
    <property type="match status" value="1"/>
</dbReference>
<dbReference type="PROSITE" id="PS51918">
    <property type="entry name" value="RADICAL_SAM"/>
    <property type="match status" value="1"/>
</dbReference>
<dbReference type="PROSITE" id="PS50926">
    <property type="entry name" value="TRAM"/>
    <property type="match status" value="1"/>
</dbReference>
<feature type="chain" id="PRO_0000374399" description="tRNA-2-methylthio-N(6)-dimethylallyladenosine synthase">
    <location>
        <begin position="1"/>
        <end position="451"/>
    </location>
</feature>
<feature type="domain" description="MTTase N-terminal" evidence="1">
    <location>
        <begin position="10"/>
        <end position="128"/>
    </location>
</feature>
<feature type="domain" description="Radical SAM core" evidence="2">
    <location>
        <begin position="151"/>
        <end position="381"/>
    </location>
</feature>
<feature type="domain" description="TRAM" evidence="1">
    <location>
        <begin position="384"/>
        <end position="447"/>
    </location>
</feature>
<feature type="binding site" evidence="1">
    <location>
        <position position="19"/>
    </location>
    <ligand>
        <name>[4Fe-4S] cluster</name>
        <dbReference type="ChEBI" id="CHEBI:49883"/>
        <label>1</label>
    </ligand>
</feature>
<feature type="binding site" evidence="1">
    <location>
        <position position="55"/>
    </location>
    <ligand>
        <name>[4Fe-4S] cluster</name>
        <dbReference type="ChEBI" id="CHEBI:49883"/>
        <label>1</label>
    </ligand>
</feature>
<feature type="binding site" evidence="1">
    <location>
        <position position="89"/>
    </location>
    <ligand>
        <name>[4Fe-4S] cluster</name>
        <dbReference type="ChEBI" id="CHEBI:49883"/>
        <label>1</label>
    </ligand>
</feature>
<feature type="binding site" evidence="1">
    <location>
        <position position="165"/>
    </location>
    <ligand>
        <name>[4Fe-4S] cluster</name>
        <dbReference type="ChEBI" id="CHEBI:49883"/>
        <label>2</label>
        <note>4Fe-4S-S-AdoMet</note>
    </ligand>
</feature>
<feature type="binding site" evidence="1">
    <location>
        <position position="169"/>
    </location>
    <ligand>
        <name>[4Fe-4S] cluster</name>
        <dbReference type="ChEBI" id="CHEBI:49883"/>
        <label>2</label>
        <note>4Fe-4S-S-AdoMet</note>
    </ligand>
</feature>
<feature type="binding site" evidence="1">
    <location>
        <position position="172"/>
    </location>
    <ligand>
        <name>[4Fe-4S] cluster</name>
        <dbReference type="ChEBI" id="CHEBI:49883"/>
        <label>2</label>
        <note>4Fe-4S-S-AdoMet</note>
    </ligand>
</feature>
<accession>B2A3X6</accession>
<name>MIAB_NATTJ</name>
<comment type="function">
    <text evidence="1">Catalyzes the methylthiolation of N6-(dimethylallyl)adenosine (i(6)A), leading to the formation of 2-methylthio-N6-(dimethylallyl)adenosine (ms(2)i(6)A) at position 37 in tRNAs that read codons beginning with uridine.</text>
</comment>
<comment type="catalytic activity">
    <reaction evidence="1">
        <text>N(6)-dimethylallyladenosine(37) in tRNA + (sulfur carrier)-SH + AH2 + 2 S-adenosyl-L-methionine = 2-methylsulfanyl-N(6)-dimethylallyladenosine(37) in tRNA + (sulfur carrier)-H + 5'-deoxyadenosine + L-methionine + A + S-adenosyl-L-homocysteine + 2 H(+)</text>
        <dbReference type="Rhea" id="RHEA:37067"/>
        <dbReference type="Rhea" id="RHEA-COMP:10375"/>
        <dbReference type="Rhea" id="RHEA-COMP:10376"/>
        <dbReference type="Rhea" id="RHEA-COMP:14737"/>
        <dbReference type="Rhea" id="RHEA-COMP:14739"/>
        <dbReference type="ChEBI" id="CHEBI:13193"/>
        <dbReference type="ChEBI" id="CHEBI:15378"/>
        <dbReference type="ChEBI" id="CHEBI:17319"/>
        <dbReference type="ChEBI" id="CHEBI:17499"/>
        <dbReference type="ChEBI" id="CHEBI:29917"/>
        <dbReference type="ChEBI" id="CHEBI:57844"/>
        <dbReference type="ChEBI" id="CHEBI:57856"/>
        <dbReference type="ChEBI" id="CHEBI:59789"/>
        <dbReference type="ChEBI" id="CHEBI:64428"/>
        <dbReference type="ChEBI" id="CHEBI:74415"/>
        <dbReference type="ChEBI" id="CHEBI:74417"/>
        <dbReference type="EC" id="2.8.4.3"/>
    </reaction>
</comment>
<comment type="cofactor">
    <cofactor evidence="1">
        <name>[4Fe-4S] cluster</name>
        <dbReference type="ChEBI" id="CHEBI:49883"/>
    </cofactor>
    <text evidence="1">Binds 2 [4Fe-4S] clusters. One cluster is coordinated with 3 cysteines and an exchangeable S-adenosyl-L-methionine.</text>
</comment>
<comment type="subunit">
    <text evidence="1">Monomer.</text>
</comment>
<comment type="subcellular location">
    <subcellularLocation>
        <location evidence="1">Cytoplasm</location>
    </subcellularLocation>
</comment>
<comment type="similarity">
    <text evidence="1">Belongs to the methylthiotransferase family. MiaB subfamily.</text>
</comment>
<evidence type="ECO:0000255" key="1">
    <source>
        <dbReference type="HAMAP-Rule" id="MF_01864"/>
    </source>
</evidence>
<evidence type="ECO:0000255" key="2">
    <source>
        <dbReference type="PROSITE-ProRule" id="PRU01266"/>
    </source>
</evidence>
<proteinExistence type="inferred from homology"/>
<keyword id="KW-0004">4Fe-4S</keyword>
<keyword id="KW-0963">Cytoplasm</keyword>
<keyword id="KW-0408">Iron</keyword>
<keyword id="KW-0411">Iron-sulfur</keyword>
<keyword id="KW-0479">Metal-binding</keyword>
<keyword id="KW-1185">Reference proteome</keyword>
<keyword id="KW-0949">S-adenosyl-L-methionine</keyword>
<keyword id="KW-0808">Transferase</keyword>
<keyword id="KW-0819">tRNA processing</keyword>